<dbReference type="EMBL" id="AF145303">
    <property type="protein sequence ID" value="AAF08384.1"/>
    <property type="molecule type" value="mRNA"/>
</dbReference>
<dbReference type="EMBL" id="AF186594">
    <property type="protein sequence ID" value="AAG16726.2"/>
    <property type="molecule type" value="Genomic_DNA"/>
</dbReference>
<dbReference type="EMBL" id="AF312231">
    <property type="protein sequence ID" value="AAG33625.1"/>
    <property type="molecule type" value="mRNA"/>
</dbReference>
<dbReference type="EMBL" id="AE014297">
    <property type="protein sequence ID" value="AAF56868.1"/>
    <property type="molecule type" value="Genomic_DNA"/>
</dbReference>
<dbReference type="EMBL" id="AY069503">
    <property type="protein sequence ID" value="AAL39648.1"/>
    <property type="status" value="ALT_INIT"/>
    <property type="molecule type" value="mRNA"/>
</dbReference>
<dbReference type="EMBL" id="BT001598">
    <property type="protein sequence ID" value="AAN71353.1"/>
    <property type="molecule type" value="mRNA"/>
</dbReference>
<dbReference type="EMBL" id="BT044102">
    <property type="protein sequence ID" value="ACH92167.1"/>
    <property type="molecule type" value="mRNA"/>
</dbReference>
<dbReference type="RefSeq" id="NP_001263058.1">
    <molecule id="Q9V3P6-1"/>
    <property type="nucleotide sequence ID" value="NM_001276129.1"/>
</dbReference>
<dbReference type="RefSeq" id="NP_651677.2">
    <molecule id="Q9V3P6-1"/>
    <property type="nucleotide sequence ID" value="NM_143420.3"/>
</dbReference>
<dbReference type="SMR" id="Q9V3P6"/>
<dbReference type="BioGRID" id="68320">
    <property type="interactions" value="43"/>
</dbReference>
<dbReference type="ComplexPortal" id="CPX-9070">
    <property type="entry name" value="26S proteasome complex"/>
</dbReference>
<dbReference type="ComplexPortal" id="CPX-9087">
    <property type="entry name" value="26S proteasome complex, testis-specific variant"/>
</dbReference>
<dbReference type="FunCoup" id="Q9V3P6">
    <property type="interactions" value="2244"/>
</dbReference>
<dbReference type="IntAct" id="Q9V3P6">
    <property type="interactions" value="37"/>
</dbReference>
<dbReference type="STRING" id="7227.FBpp0303405"/>
<dbReference type="iPTMnet" id="Q9V3P6"/>
<dbReference type="PaxDb" id="7227-FBpp0084754"/>
<dbReference type="DNASU" id="43449"/>
<dbReference type="EnsemblMetazoa" id="FBtr0085385">
    <molecule id="Q9V3P6-1"/>
    <property type="protein sequence ID" value="FBpp0084754"/>
    <property type="gene ID" value="FBgn0028692"/>
</dbReference>
<dbReference type="EnsemblMetazoa" id="FBtr0334532">
    <molecule id="Q9V3P6-1"/>
    <property type="protein sequence ID" value="FBpp0306599"/>
    <property type="gene ID" value="FBgn0028692"/>
</dbReference>
<dbReference type="GeneID" id="43449"/>
<dbReference type="KEGG" id="dme:Dmel_CG11888"/>
<dbReference type="UCSC" id="CG11888-RA">
    <molecule id="Q9V3P6-1"/>
    <property type="organism name" value="d. melanogaster"/>
</dbReference>
<dbReference type="AGR" id="FB:FBgn0028692"/>
<dbReference type="CTD" id="6185"/>
<dbReference type="FlyBase" id="FBgn0028692">
    <property type="gene designation" value="Rpn2"/>
</dbReference>
<dbReference type="VEuPathDB" id="VectorBase:FBgn0028692"/>
<dbReference type="eggNOG" id="KOG2062">
    <property type="taxonomic scope" value="Eukaryota"/>
</dbReference>
<dbReference type="GeneTree" id="ENSGT00940000153386"/>
<dbReference type="HOGENOM" id="CLU_002323_0_0_1"/>
<dbReference type="InParanoid" id="Q9V3P6"/>
<dbReference type="OMA" id="IMFGRQE"/>
<dbReference type="OrthoDB" id="261572at2759"/>
<dbReference type="PhylomeDB" id="Q9V3P6"/>
<dbReference type="BRENDA" id="3.4.25.1">
    <property type="organism ID" value="1994"/>
</dbReference>
<dbReference type="Reactome" id="R-DME-1169091">
    <property type="pathway name" value="Activation of NF-kappaB in B cells"/>
</dbReference>
<dbReference type="Reactome" id="R-DME-1234176">
    <property type="pathway name" value="Oxygen-dependent proline hydroxylation of Hypoxia-inducible Factor Alpha"/>
</dbReference>
<dbReference type="Reactome" id="R-DME-1236978">
    <property type="pathway name" value="Cross-presentation of soluble exogenous antigens (endosomes)"/>
</dbReference>
<dbReference type="Reactome" id="R-DME-174084">
    <property type="pathway name" value="Autodegradation of Cdh1 by Cdh1:APC/C"/>
</dbReference>
<dbReference type="Reactome" id="R-DME-174154">
    <property type="pathway name" value="APC/C:Cdc20 mediated degradation of Securin"/>
</dbReference>
<dbReference type="Reactome" id="R-DME-174178">
    <property type="pathway name" value="APC/C:Cdh1 mediated degradation of Cdc20 and other APC/C:Cdh1 targeted proteins in late mitosis/early G1"/>
</dbReference>
<dbReference type="Reactome" id="R-DME-174184">
    <property type="pathway name" value="Cdc20:Phospho-APC/C mediated degradation of Cyclin A"/>
</dbReference>
<dbReference type="Reactome" id="R-DME-187577">
    <property type="pathway name" value="SCF(Skp2)-mediated degradation of p27/p21"/>
</dbReference>
<dbReference type="Reactome" id="R-DME-195253">
    <property type="pathway name" value="Degradation of beta-catenin by the destruction complex"/>
</dbReference>
<dbReference type="Reactome" id="R-DME-202424">
    <property type="pathway name" value="Downstream TCR signaling"/>
</dbReference>
<dbReference type="Reactome" id="R-DME-209360">
    <property type="pathway name" value="Ubiquitination and proteolysis of phosphorylated CI"/>
</dbReference>
<dbReference type="Reactome" id="R-DME-209406">
    <property type="pathway name" value="Degradation of NF-kappa-B inhibitor, CACT"/>
</dbReference>
<dbReference type="Reactome" id="R-DME-209461">
    <property type="pathway name" value="Ubiquitination and degradation of phosphorylated ARM"/>
</dbReference>
<dbReference type="Reactome" id="R-DME-216167">
    <property type="pathway name" value="Nuclear CI is degraded"/>
</dbReference>
<dbReference type="Reactome" id="R-DME-2467813">
    <property type="pathway name" value="Separation of Sister Chromatids"/>
</dbReference>
<dbReference type="Reactome" id="R-DME-2871837">
    <property type="pathway name" value="FCERI mediated NF-kB activation"/>
</dbReference>
<dbReference type="Reactome" id="R-DME-350562">
    <property type="pathway name" value="Regulation of ornithine decarboxylase (ODC)"/>
</dbReference>
<dbReference type="Reactome" id="R-DME-382556">
    <property type="pathway name" value="ABC-family proteins mediated transport"/>
</dbReference>
<dbReference type="Reactome" id="R-DME-432395">
    <property type="pathway name" value="Degradation of TIM"/>
</dbReference>
<dbReference type="Reactome" id="R-DME-432524">
    <property type="pathway name" value="Degradation of PER"/>
</dbReference>
<dbReference type="Reactome" id="R-DME-432626">
    <property type="pathway name" value="Circadian Clock pathway"/>
</dbReference>
<dbReference type="Reactome" id="R-DME-450408">
    <property type="pathway name" value="AUF1 (hnRNP D0) binds and destabilizes mRNA"/>
</dbReference>
<dbReference type="Reactome" id="R-DME-4608870">
    <property type="pathway name" value="Asymmetric localization of PCP proteins"/>
</dbReference>
<dbReference type="Reactome" id="R-DME-4641257">
    <property type="pathway name" value="Degradation of AXIN"/>
</dbReference>
<dbReference type="Reactome" id="R-DME-4641258">
    <property type="pathway name" value="Degradation of DVL"/>
</dbReference>
<dbReference type="Reactome" id="R-DME-5358346">
    <property type="pathway name" value="Hedgehog ligand biogenesis"/>
</dbReference>
<dbReference type="Reactome" id="R-DME-538864">
    <property type="pathway name" value="Degradation of CRY"/>
</dbReference>
<dbReference type="Reactome" id="R-DME-5607761">
    <property type="pathway name" value="Dectin-1 mediated noncanonical NF-kB signaling"/>
</dbReference>
<dbReference type="Reactome" id="R-DME-5607764">
    <property type="pathway name" value="CLEC7A (Dectin-1) signaling"/>
</dbReference>
<dbReference type="Reactome" id="R-DME-5610780">
    <property type="pathway name" value="Degradation of GLI1 by the proteasome"/>
</dbReference>
<dbReference type="Reactome" id="R-DME-5610785">
    <property type="pathway name" value="GLI3 is processed to GLI3R by the proteasome"/>
</dbReference>
<dbReference type="Reactome" id="R-DME-5632684">
    <property type="pathway name" value="Hedgehog 'on' state"/>
</dbReference>
<dbReference type="Reactome" id="R-DME-5658442">
    <property type="pathway name" value="Regulation of RAS by GAPs"/>
</dbReference>
<dbReference type="Reactome" id="R-DME-5676590">
    <property type="pathway name" value="NIK--&gt;noncanonical NF-kB signaling"/>
</dbReference>
<dbReference type="Reactome" id="R-DME-5689603">
    <property type="pathway name" value="UCH proteinases"/>
</dbReference>
<dbReference type="Reactome" id="R-DME-5689880">
    <property type="pathway name" value="Ub-specific processing proteases"/>
</dbReference>
<dbReference type="Reactome" id="R-DME-6798695">
    <property type="pathway name" value="Neutrophil degranulation"/>
</dbReference>
<dbReference type="Reactome" id="R-DME-68949">
    <property type="pathway name" value="Orc1 removal from chromatin"/>
</dbReference>
<dbReference type="Reactome" id="R-DME-69017">
    <property type="pathway name" value="CDK-mediated phosphorylation and removal of Cdc6"/>
</dbReference>
<dbReference type="Reactome" id="R-DME-69601">
    <property type="pathway name" value="Ubiquitin Mediated Degradation of Phosphorylated Cdc25A"/>
</dbReference>
<dbReference type="Reactome" id="R-DME-75815">
    <property type="pathway name" value="Ubiquitin-dependent degradation of Cyclin D"/>
</dbReference>
<dbReference type="Reactome" id="R-DME-8854050">
    <property type="pathway name" value="FBXL7 down-regulates AURKA during mitotic entry and in early mitosis"/>
</dbReference>
<dbReference type="Reactome" id="R-DME-8939236">
    <property type="pathway name" value="RUNX1 regulates transcription of genes involved in differentiation of HSCs"/>
</dbReference>
<dbReference type="Reactome" id="R-DME-8939902">
    <property type="pathway name" value="Regulation of RUNX2 expression and activity"/>
</dbReference>
<dbReference type="Reactome" id="R-DME-8941858">
    <property type="pathway name" value="Regulation of RUNX3 expression and activity"/>
</dbReference>
<dbReference type="Reactome" id="R-DME-8948751">
    <property type="pathway name" value="Regulation of PTEN stability and activity"/>
</dbReference>
<dbReference type="Reactome" id="R-DME-8951664">
    <property type="pathway name" value="Neddylation"/>
</dbReference>
<dbReference type="Reactome" id="R-DME-9020702">
    <property type="pathway name" value="Interleukin-1 signaling"/>
</dbReference>
<dbReference type="Reactome" id="R-DME-9755511">
    <property type="pathway name" value="KEAP1-NFE2L2 pathway"/>
</dbReference>
<dbReference type="Reactome" id="R-DME-9762114">
    <property type="pathway name" value="GSK3B and BTRC:CUL1-mediated-degradation of NFE2L2"/>
</dbReference>
<dbReference type="Reactome" id="R-DME-983168">
    <property type="pathway name" value="Antigen processing: Ubiquitination &amp; Proteasome degradation"/>
</dbReference>
<dbReference type="Reactome" id="R-DME-9907900">
    <property type="pathway name" value="Proteasome assembly"/>
</dbReference>
<dbReference type="BioGRID-ORCS" id="43449">
    <property type="hits" value="0 hits in 3 CRISPR screens"/>
</dbReference>
<dbReference type="GenomeRNAi" id="43449"/>
<dbReference type="PRO" id="PR:Q9V3P6"/>
<dbReference type="Proteomes" id="UP000000803">
    <property type="component" value="Chromosome 3R"/>
</dbReference>
<dbReference type="Bgee" id="FBgn0028692">
    <property type="expression patterns" value="Expressed in eye disc (Drosophila) and 202 other cell types or tissues"/>
</dbReference>
<dbReference type="ExpressionAtlas" id="Q9V3P6">
    <property type="expression patterns" value="baseline and differential"/>
</dbReference>
<dbReference type="GO" id="GO:0005829">
    <property type="term" value="C:cytosol"/>
    <property type="evidence" value="ECO:0000304"/>
    <property type="project" value="Reactome"/>
</dbReference>
<dbReference type="GO" id="GO:0005654">
    <property type="term" value="C:nucleoplasm"/>
    <property type="evidence" value="ECO:0000304"/>
    <property type="project" value="Reactome"/>
</dbReference>
<dbReference type="GO" id="GO:0005634">
    <property type="term" value="C:nucleus"/>
    <property type="evidence" value="ECO:0000318"/>
    <property type="project" value="GO_Central"/>
</dbReference>
<dbReference type="GO" id="GO:0000502">
    <property type="term" value="C:proteasome complex"/>
    <property type="evidence" value="ECO:0000314"/>
    <property type="project" value="FlyBase"/>
</dbReference>
<dbReference type="GO" id="GO:0005838">
    <property type="term" value="C:proteasome regulatory particle"/>
    <property type="evidence" value="ECO:0000314"/>
    <property type="project" value="FlyBase"/>
</dbReference>
<dbReference type="GO" id="GO:0008540">
    <property type="term" value="C:proteasome regulatory particle, base subcomplex"/>
    <property type="evidence" value="ECO:0000250"/>
    <property type="project" value="FlyBase"/>
</dbReference>
<dbReference type="GO" id="GO:0034515">
    <property type="term" value="C:proteasome storage granule"/>
    <property type="evidence" value="ECO:0000318"/>
    <property type="project" value="GO_Central"/>
</dbReference>
<dbReference type="GO" id="GO:0030234">
    <property type="term" value="F:enzyme regulator activity"/>
    <property type="evidence" value="ECO:0007669"/>
    <property type="project" value="InterPro"/>
</dbReference>
<dbReference type="GO" id="GO:0008270">
    <property type="term" value="F:zinc ion binding"/>
    <property type="evidence" value="ECO:0000314"/>
    <property type="project" value="FlyBase"/>
</dbReference>
<dbReference type="GO" id="GO:0043161">
    <property type="term" value="P:proteasome-mediated ubiquitin-dependent protein catabolic process"/>
    <property type="evidence" value="ECO:0000315"/>
    <property type="project" value="FlyBase"/>
</dbReference>
<dbReference type="GO" id="GO:0042176">
    <property type="term" value="P:regulation of protein catabolic process"/>
    <property type="evidence" value="ECO:0007669"/>
    <property type="project" value="InterPro"/>
</dbReference>
<dbReference type="FunFam" id="1.25.10.10:FF:000017">
    <property type="entry name" value="26S proteasome non-ATPase regulatory subunit 1"/>
    <property type="match status" value="1"/>
</dbReference>
<dbReference type="Gene3D" id="1.25.10.10">
    <property type="entry name" value="Leucine-rich Repeat Variant"/>
    <property type="match status" value="1"/>
</dbReference>
<dbReference type="InterPro" id="IPR016642">
    <property type="entry name" value="26S_Psome_Rpn2"/>
</dbReference>
<dbReference type="InterPro" id="IPR011989">
    <property type="entry name" value="ARM-like"/>
</dbReference>
<dbReference type="InterPro" id="IPR016024">
    <property type="entry name" value="ARM-type_fold"/>
</dbReference>
<dbReference type="InterPro" id="IPR002015">
    <property type="entry name" value="Proteasome/cyclosome_rpt"/>
</dbReference>
<dbReference type="InterPro" id="IPR048570">
    <property type="entry name" value="PSMD1_RPN2_N"/>
</dbReference>
<dbReference type="InterPro" id="IPR040623">
    <property type="entry name" value="RPN2_C"/>
</dbReference>
<dbReference type="PANTHER" id="PTHR10943">
    <property type="entry name" value="26S PROTEASOME NON-ATPASE REGULATORY SUBUNIT"/>
    <property type="match status" value="1"/>
</dbReference>
<dbReference type="PANTHER" id="PTHR10943:SF2">
    <property type="entry name" value="26S PROTEASOME NON-ATPASE REGULATORY SUBUNIT 1"/>
    <property type="match status" value="1"/>
</dbReference>
<dbReference type="Pfam" id="PF13646">
    <property type="entry name" value="HEAT_2"/>
    <property type="match status" value="1"/>
</dbReference>
<dbReference type="Pfam" id="PF01851">
    <property type="entry name" value="PC_rep"/>
    <property type="match status" value="3"/>
</dbReference>
<dbReference type="Pfam" id="PF18004">
    <property type="entry name" value="RPN2_C"/>
    <property type="match status" value="1"/>
</dbReference>
<dbReference type="Pfam" id="PF21505">
    <property type="entry name" value="RPN2_N"/>
    <property type="match status" value="1"/>
</dbReference>
<dbReference type="PIRSF" id="PIRSF015947">
    <property type="entry name" value="26S_Psome_Rpn2"/>
    <property type="match status" value="1"/>
</dbReference>
<dbReference type="SUPFAM" id="SSF48371">
    <property type="entry name" value="ARM repeat"/>
    <property type="match status" value="1"/>
</dbReference>
<comment type="function">
    <text evidence="2">Acts as a regulatory subunit of the 26S proteasome which is involved in the ATP-dependent degradation of ubiquitinated proteins.</text>
</comment>
<comment type="alternative products">
    <event type="alternative splicing"/>
    <isoform>
        <id>Q9V3P6-1</id>
        <name>A</name>
        <sequence type="displayed"/>
    </isoform>
    <isoform>
        <id>Q9V3P6-2</id>
        <name>B</name>
        <sequence type="described" ref="VSP_011611"/>
    </isoform>
</comment>
<comment type="similarity">
    <text evidence="5">Belongs to the proteasome subunit S1 family.</text>
</comment>
<comment type="sequence caution" evidence="5">
    <conflict type="erroneous initiation">
        <sequence resource="EMBL-CDS" id="AAL39648"/>
    </conflict>
</comment>
<name>PSMD1_DROME</name>
<organism>
    <name type="scientific">Drosophila melanogaster</name>
    <name type="common">Fruit fly</name>
    <dbReference type="NCBI Taxonomy" id="7227"/>
    <lineage>
        <taxon>Eukaryota</taxon>
        <taxon>Metazoa</taxon>
        <taxon>Ecdysozoa</taxon>
        <taxon>Arthropoda</taxon>
        <taxon>Hexapoda</taxon>
        <taxon>Insecta</taxon>
        <taxon>Pterygota</taxon>
        <taxon>Neoptera</taxon>
        <taxon>Endopterygota</taxon>
        <taxon>Diptera</taxon>
        <taxon>Brachycera</taxon>
        <taxon>Muscomorpha</taxon>
        <taxon>Ephydroidea</taxon>
        <taxon>Drosophilidae</taxon>
        <taxon>Drosophila</taxon>
        <taxon>Sophophora</taxon>
    </lineage>
</organism>
<evidence type="ECO:0000256" key="1">
    <source>
        <dbReference type="SAM" id="MobiDB-lite"/>
    </source>
</evidence>
<evidence type="ECO:0000269" key="2">
    <source>
    </source>
</evidence>
<evidence type="ECO:0000269" key="3">
    <source>
    </source>
</evidence>
<evidence type="ECO:0000303" key="4">
    <source>
    </source>
</evidence>
<evidence type="ECO:0000305" key="5"/>
<keyword id="KW-0025">Alternative splicing</keyword>
<keyword id="KW-0903">Direct protein sequencing</keyword>
<keyword id="KW-0597">Phosphoprotein</keyword>
<keyword id="KW-0647">Proteasome</keyword>
<keyword id="KW-1185">Reference proteome</keyword>
<keyword id="KW-0677">Repeat</keyword>
<gene>
    <name type="primary">Rpn2</name>
    <name type="ORF">CG11888</name>
</gene>
<reference key="1">
    <citation type="journal article" date="2000" name="J. Cell Biol.">
        <title>The regulatory complex of Drosophila melanogaster 26S proteasomes. Subunit composition and localization of a deubiquitylating enzyme.</title>
        <authorList>
            <person name="Hoelzl H."/>
            <person name="Kapelari B."/>
            <person name="Kellermann J."/>
            <person name="Seemueller E."/>
            <person name="Suemegi M."/>
            <person name="Udvardy A."/>
            <person name="Medalia O."/>
            <person name="Sperling J."/>
            <person name="Mueller S.A."/>
            <person name="Engel A."/>
            <person name="Baumeister W."/>
        </authorList>
    </citation>
    <scope>NUCLEOTIDE SEQUENCE [MRNA] (ISOFORM A)</scope>
    <scope>PROTEIN SEQUENCE OF 844-856</scope>
    <scope>FUNCTION</scope>
    <source>
        <strain>Berkeley</strain>
        <tissue>Embryo</tissue>
    </source>
</reference>
<reference key="2">
    <citation type="journal article" date="2001" name="Genes Dev.">
        <title>Drosophila stem loop binding protein coordinates accumulation of mature histone mRNA with cell cycle progression.</title>
        <authorList>
            <person name="Sullivan E.O."/>
            <person name="Santiago C."/>
            <person name="Parker E.D."/>
            <person name="Dominski Z."/>
            <person name="Yang X."/>
            <person name="Lanzotti D.J."/>
            <person name="Ingledue T.C."/>
            <person name="Marzluff W.F."/>
            <person name="Duronio R.J."/>
        </authorList>
    </citation>
    <scope>NUCLEOTIDE SEQUENCE [MRNA] (ISOFORM B)</scope>
    <scope>NUCLEOTIDE SEQUENCE [GENOMIC DNA] OF 1-531 (ISOFORM A)</scope>
    <source>
        <strain>Berkeley</strain>
        <strain>Oregon-R</strain>
        <tissue>Embryo</tissue>
    </source>
</reference>
<reference key="3">
    <citation type="journal article" date="2000" name="Science">
        <title>The genome sequence of Drosophila melanogaster.</title>
        <authorList>
            <person name="Adams M.D."/>
            <person name="Celniker S.E."/>
            <person name="Holt R.A."/>
            <person name="Evans C.A."/>
            <person name="Gocayne J.D."/>
            <person name="Amanatides P.G."/>
            <person name="Scherer S.E."/>
            <person name="Li P.W."/>
            <person name="Hoskins R.A."/>
            <person name="Galle R.F."/>
            <person name="George R.A."/>
            <person name="Lewis S.E."/>
            <person name="Richards S."/>
            <person name="Ashburner M."/>
            <person name="Henderson S.N."/>
            <person name="Sutton G.G."/>
            <person name="Wortman J.R."/>
            <person name="Yandell M.D."/>
            <person name="Zhang Q."/>
            <person name="Chen L.X."/>
            <person name="Brandon R.C."/>
            <person name="Rogers Y.-H.C."/>
            <person name="Blazej R.G."/>
            <person name="Champe M."/>
            <person name="Pfeiffer B.D."/>
            <person name="Wan K.H."/>
            <person name="Doyle C."/>
            <person name="Baxter E.G."/>
            <person name="Helt G."/>
            <person name="Nelson C.R."/>
            <person name="Miklos G.L.G."/>
            <person name="Abril J.F."/>
            <person name="Agbayani A."/>
            <person name="An H.-J."/>
            <person name="Andrews-Pfannkoch C."/>
            <person name="Baldwin D."/>
            <person name="Ballew R.M."/>
            <person name="Basu A."/>
            <person name="Baxendale J."/>
            <person name="Bayraktaroglu L."/>
            <person name="Beasley E.M."/>
            <person name="Beeson K.Y."/>
            <person name="Benos P.V."/>
            <person name="Berman B.P."/>
            <person name="Bhandari D."/>
            <person name="Bolshakov S."/>
            <person name="Borkova D."/>
            <person name="Botchan M.R."/>
            <person name="Bouck J."/>
            <person name="Brokstein P."/>
            <person name="Brottier P."/>
            <person name="Burtis K.C."/>
            <person name="Busam D.A."/>
            <person name="Butler H."/>
            <person name="Cadieu E."/>
            <person name="Center A."/>
            <person name="Chandra I."/>
            <person name="Cherry J.M."/>
            <person name="Cawley S."/>
            <person name="Dahlke C."/>
            <person name="Davenport L.B."/>
            <person name="Davies P."/>
            <person name="de Pablos B."/>
            <person name="Delcher A."/>
            <person name="Deng Z."/>
            <person name="Mays A.D."/>
            <person name="Dew I."/>
            <person name="Dietz S.M."/>
            <person name="Dodson K."/>
            <person name="Doup L.E."/>
            <person name="Downes M."/>
            <person name="Dugan-Rocha S."/>
            <person name="Dunkov B.C."/>
            <person name="Dunn P."/>
            <person name="Durbin K.J."/>
            <person name="Evangelista C.C."/>
            <person name="Ferraz C."/>
            <person name="Ferriera S."/>
            <person name="Fleischmann W."/>
            <person name="Fosler C."/>
            <person name="Gabrielian A.E."/>
            <person name="Garg N.S."/>
            <person name="Gelbart W.M."/>
            <person name="Glasser K."/>
            <person name="Glodek A."/>
            <person name="Gong F."/>
            <person name="Gorrell J.H."/>
            <person name="Gu Z."/>
            <person name="Guan P."/>
            <person name="Harris M."/>
            <person name="Harris N.L."/>
            <person name="Harvey D.A."/>
            <person name="Heiman T.J."/>
            <person name="Hernandez J.R."/>
            <person name="Houck J."/>
            <person name="Hostin D."/>
            <person name="Houston K.A."/>
            <person name="Howland T.J."/>
            <person name="Wei M.-H."/>
            <person name="Ibegwam C."/>
            <person name="Jalali M."/>
            <person name="Kalush F."/>
            <person name="Karpen G.H."/>
            <person name="Ke Z."/>
            <person name="Kennison J.A."/>
            <person name="Ketchum K.A."/>
            <person name="Kimmel B.E."/>
            <person name="Kodira C.D."/>
            <person name="Kraft C.L."/>
            <person name="Kravitz S."/>
            <person name="Kulp D."/>
            <person name="Lai Z."/>
            <person name="Lasko P."/>
            <person name="Lei Y."/>
            <person name="Levitsky A.A."/>
            <person name="Li J.H."/>
            <person name="Li Z."/>
            <person name="Liang Y."/>
            <person name="Lin X."/>
            <person name="Liu X."/>
            <person name="Mattei B."/>
            <person name="McIntosh T.C."/>
            <person name="McLeod M.P."/>
            <person name="McPherson D."/>
            <person name="Merkulov G."/>
            <person name="Milshina N.V."/>
            <person name="Mobarry C."/>
            <person name="Morris J."/>
            <person name="Moshrefi A."/>
            <person name="Mount S.M."/>
            <person name="Moy M."/>
            <person name="Murphy B."/>
            <person name="Murphy L."/>
            <person name="Muzny D.M."/>
            <person name="Nelson D.L."/>
            <person name="Nelson D.R."/>
            <person name="Nelson K.A."/>
            <person name="Nixon K."/>
            <person name="Nusskern D.R."/>
            <person name="Pacleb J.M."/>
            <person name="Palazzolo M."/>
            <person name="Pittman G.S."/>
            <person name="Pan S."/>
            <person name="Pollard J."/>
            <person name="Puri V."/>
            <person name="Reese M.G."/>
            <person name="Reinert K."/>
            <person name="Remington K."/>
            <person name="Saunders R.D.C."/>
            <person name="Scheeler F."/>
            <person name="Shen H."/>
            <person name="Shue B.C."/>
            <person name="Siden-Kiamos I."/>
            <person name="Simpson M."/>
            <person name="Skupski M.P."/>
            <person name="Smith T.J."/>
            <person name="Spier E."/>
            <person name="Spradling A.C."/>
            <person name="Stapleton M."/>
            <person name="Strong R."/>
            <person name="Sun E."/>
            <person name="Svirskas R."/>
            <person name="Tector C."/>
            <person name="Turner R."/>
            <person name="Venter E."/>
            <person name="Wang A.H."/>
            <person name="Wang X."/>
            <person name="Wang Z.-Y."/>
            <person name="Wassarman D.A."/>
            <person name="Weinstock G.M."/>
            <person name="Weissenbach J."/>
            <person name="Williams S.M."/>
            <person name="Woodage T."/>
            <person name="Worley K.C."/>
            <person name="Wu D."/>
            <person name="Yang S."/>
            <person name="Yao Q.A."/>
            <person name="Ye J."/>
            <person name="Yeh R.-F."/>
            <person name="Zaveri J.S."/>
            <person name="Zhan M."/>
            <person name="Zhang G."/>
            <person name="Zhao Q."/>
            <person name="Zheng L."/>
            <person name="Zheng X.H."/>
            <person name="Zhong F.N."/>
            <person name="Zhong W."/>
            <person name="Zhou X."/>
            <person name="Zhu S.C."/>
            <person name="Zhu X."/>
            <person name="Smith H.O."/>
            <person name="Gibbs R.A."/>
            <person name="Myers E.W."/>
            <person name="Rubin G.M."/>
            <person name="Venter J.C."/>
        </authorList>
    </citation>
    <scope>NUCLEOTIDE SEQUENCE [LARGE SCALE GENOMIC DNA]</scope>
    <source>
        <strain>Berkeley</strain>
    </source>
</reference>
<reference key="4">
    <citation type="journal article" date="2002" name="Genome Biol.">
        <title>Annotation of the Drosophila melanogaster euchromatic genome: a systematic review.</title>
        <authorList>
            <person name="Misra S."/>
            <person name="Crosby M.A."/>
            <person name="Mungall C.J."/>
            <person name="Matthews B.B."/>
            <person name="Campbell K.S."/>
            <person name="Hradecky P."/>
            <person name="Huang Y."/>
            <person name="Kaminker J.S."/>
            <person name="Millburn G.H."/>
            <person name="Prochnik S.E."/>
            <person name="Smith C.D."/>
            <person name="Tupy J.L."/>
            <person name="Whitfield E.J."/>
            <person name="Bayraktaroglu L."/>
            <person name="Berman B.P."/>
            <person name="Bettencourt B.R."/>
            <person name="Celniker S.E."/>
            <person name="de Grey A.D.N.J."/>
            <person name="Drysdale R.A."/>
            <person name="Harris N.L."/>
            <person name="Richter J."/>
            <person name="Russo S."/>
            <person name="Schroeder A.J."/>
            <person name="Shu S.Q."/>
            <person name="Stapleton M."/>
            <person name="Yamada C."/>
            <person name="Ashburner M."/>
            <person name="Gelbart W.M."/>
            <person name="Rubin G.M."/>
            <person name="Lewis S.E."/>
        </authorList>
    </citation>
    <scope>GENOME REANNOTATION</scope>
    <source>
        <strain>Berkeley</strain>
    </source>
</reference>
<reference key="5">
    <citation type="journal article" date="2002" name="Genome Biol.">
        <title>A Drosophila full-length cDNA resource.</title>
        <authorList>
            <person name="Stapleton M."/>
            <person name="Carlson J.W."/>
            <person name="Brokstein P."/>
            <person name="Yu C."/>
            <person name="Champe M."/>
            <person name="George R.A."/>
            <person name="Guarin H."/>
            <person name="Kronmiller B."/>
            <person name="Pacleb J.M."/>
            <person name="Park S."/>
            <person name="Wan K.H."/>
            <person name="Rubin G.M."/>
            <person name="Celniker S.E."/>
        </authorList>
    </citation>
    <scope>NUCLEOTIDE SEQUENCE [LARGE SCALE MRNA] (ISOFORM A)</scope>
    <source>
        <strain>Berkeley</strain>
        <tissue>Embryo</tissue>
    </source>
</reference>
<reference key="6">
    <citation type="submission" date="2008-09" db="EMBL/GenBank/DDBJ databases">
        <authorList>
            <person name="Carlson J.W."/>
            <person name="Booth B."/>
            <person name="Frise E."/>
            <person name="Park S."/>
            <person name="Wan K.H."/>
            <person name="Yu C."/>
            <person name="Celniker S.E."/>
        </authorList>
    </citation>
    <scope>NUCLEOTIDE SEQUENCE [LARGE SCALE MRNA] (ISOFORM A)</scope>
    <source>
        <strain>Berkeley</strain>
    </source>
</reference>
<reference key="7">
    <citation type="journal article" date="2008" name="J. Proteome Res.">
        <title>Phosphoproteome analysis of Drosophila melanogaster embryos.</title>
        <authorList>
            <person name="Zhai B."/>
            <person name="Villen J."/>
            <person name="Beausoleil S.A."/>
            <person name="Mintseris J."/>
            <person name="Gygi S.P."/>
        </authorList>
    </citation>
    <scope>PHOSPHORYLATION [LARGE SCALE ANALYSIS] AT THR-291; SER-298; SER-303; SER-305 AND THR-310</scope>
    <scope>IDENTIFICATION BY MASS SPECTROMETRY</scope>
    <source>
        <tissue>Embryo</tissue>
    </source>
</reference>
<proteinExistence type="evidence at protein level"/>
<sequence>MSLTSAAGIISLLDEPMPDLKVFALKKLDNIVDEFWPEISESIEKIEMLHEDRSFPENKLAGMVASKVFYHLGSFEDALTYALGAGDLFDVNARNEYTETIIAKCIDFYIAQRVEFIENPKEASVVDERLEGIVNRMIQRCLDDNQFRQALGIALETRRMDTFKDAIMKSDDVRGMLAYAYNVTMSLIQNRGFRNEVLRCLVSLYRDLGVPDYVNMCQCLIFLEDPFAVAEMLDNLTRSSVETNNLMAYQIAFDLYESATQEFLGNVLQHLKNTAPIPTALPSTFKPQGTTSEDGAKSEGDKSKSDEDITEETPADDKVERTIDSLNEVEKLHQKNIEKLISILSGEVSIDLQLQFLIRSNHADLQVLRGTKEAVRVSICHTATVIANAFMHSGTTSDQFLRDNLDWLARATNWAKLTATASLGVIHRGHEKDSLALMQSYLPKEAGPSSGYSEGGALYALGLIHANHGANIIDYLLQQLKDAQNENVRHGGCLGLGLAGMGTHRQDLYEQLKFNLYQDDAVTGEAAGIAMGMVMLGSKNAQAIEDMVSYAQETQHEKILRGLAVGISLTMFSRLEEADPLVTSLSSDKDPVLRRSGMYTIAMAYNGTGSNKAIRKLLHVAVSDVNDDVRRAAVTAIGFILFRSPEQCPSVVSLLAESYNPHVRYGAAMALGIACAGTGLREAIALLEPMVKFDPVNFVRQGALIASAMILIQHTDQSCPKSTFFRQLYAEVISNKHEDVMAKYGAILAQGIIDAGGRNATLSLQSRTGHTNLQAVVGMLAFTQYWYWFPLAHTLSLAFTPTCVIGLNSDLKMPKMEYKSAAKPSLYAYPAPLEEKKSEEREKVATAVLSIAARQKRRENADKKEDEKMDVDEDSKEGAAVKKDEEAKADEKMVTDEKPKKKDEKEKKKEEDKEKEAAGTSSEKDKDKEKDKKEKKEPEPTSEILQNPARVLRQQLKVLSVIDGQSYEPLKDVTIGGIIVFQHTGKAEDQELVEPVAAFGPMNDEEKEPEPPEPFEYIED</sequence>
<accession>Q9V3P6</accession>
<accession>B5RIH8</accession>
<accession>Q8IGU4</accession>
<accession>Q8T075</accession>
<accession>Q9GSE5</accession>
<accession>Q9GU70</accession>
<feature type="chain" id="PRO_0000173804" description="26S proteasome non-ATPase regulatory subunit 1">
    <location>
        <begin position="1"/>
        <end position="1020"/>
    </location>
</feature>
<feature type="repeat" description="PC 1">
    <location>
        <begin position="418"/>
        <end position="452"/>
    </location>
</feature>
<feature type="repeat" description="PC 2">
    <location>
        <begin position="456"/>
        <end position="489"/>
    </location>
</feature>
<feature type="repeat" description="PC 3">
    <location>
        <begin position="491"/>
        <end position="525"/>
    </location>
</feature>
<feature type="repeat" description="PC 4">
    <location>
        <begin position="526"/>
        <end position="560"/>
    </location>
</feature>
<feature type="repeat" description="PC 5">
    <location>
        <begin position="562"/>
        <end position="595"/>
    </location>
</feature>
<feature type="repeat" description="PC 6">
    <location>
        <begin position="596"/>
        <end position="631"/>
    </location>
</feature>
<feature type="repeat" description="PC 7">
    <location>
        <begin position="632"/>
        <end position="664"/>
    </location>
</feature>
<feature type="repeat" description="PC 8">
    <location>
        <begin position="666"/>
        <end position="701"/>
    </location>
</feature>
<feature type="repeat" description="PC 9">
    <location>
        <begin position="702"/>
        <end position="742"/>
    </location>
</feature>
<feature type="repeat" description="PC 10">
    <location>
        <begin position="745"/>
        <end position="777"/>
    </location>
</feature>
<feature type="region of interest" description="Disordered" evidence="1">
    <location>
        <begin position="279"/>
        <end position="322"/>
    </location>
</feature>
<feature type="region of interest" description="Disordered" evidence="1">
    <location>
        <begin position="855"/>
        <end position="950"/>
    </location>
</feature>
<feature type="region of interest" description="Disordered" evidence="1">
    <location>
        <begin position="999"/>
        <end position="1020"/>
    </location>
</feature>
<feature type="compositionally biased region" description="Polar residues" evidence="1">
    <location>
        <begin position="281"/>
        <end position="293"/>
    </location>
</feature>
<feature type="compositionally biased region" description="Basic and acidic residues" evidence="1">
    <location>
        <begin position="294"/>
        <end position="307"/>
    </location>
</feature>
<feature type="compositionally biased region" description="Basic and acidic residues" evidence="1">
    <location>
        <begin position="858"/>
        <end position="867"/>
    </location>
</feature>
<feature type="compositionally biased region" description="Basic and acidic residues" evidence="1">
    <location>
        <begin position="876"/>
        <end position="939"/>
    </location>
</feature>
<feature type="compositionally biased region" description="Acidic residues" evidence="1">
    <location>
        <begin position="1003"/>
        <end position="1020"/>
    </location>
</feature>
<feature type="modified residue" description="Phosphothreonine" evidence="3">
    <location>
        <position position="291"/>
    </location>
</feature>
<feature type="modified residue" description="Phosphoserine" evidence="3">
    <location>
        <position position="298"/>
    </location>
</feature>
<feature type="modified residue" description="Phosphoserine" evidence="3">
    <location>
        <position position="303"/>
    </location>
</feature>
<feature type="modified residue" description="Phosphoserine" evidence="3">
    <location>
        <position position="305"/>
    </location>
</feature>
<feature type="modified residue" description="Phosphothreonine" evidence="3">
    <location>
        <position position="310"/>
    </location>
</feature>
<feature type="splice variant" id="VSP_011611" description="In isoform B." evidence="4">
    <location>
        <begin position="41"/>
        <end position="114"/>
    </location>
</feature>
<feature type="sequence conflict" description="In Ref. 5; AAN71353." evidence="5" ref="5">
    <original>E</original>
    <variation>G</variation>
    <location>
        <position position="646"/>
    </location>
</feature>
<protein>
    <recommendedName>
        <fullName>26S proteasome non-ATPase regulatory subunit 1</fullName>
    </recommendedName>
    <alternativeName>
        <fullName>26S proteasome regulatory complex subunit p110</fullName>
    </alternativeName>
    <alternativeName>
        <fullName>26S proteasome regulatory subunit RPN2</fullName>
    </alternativeName>
</protein>